<comment type="function">
    <text evidence="1">Involved in nonsense-mediated decay (NMD) of mRNAs containing premature stop codons. Probable component of kinase complex containing smg-1 and recruited to stalled ribosomes (By similarity).</text>
</comment>
<comment type="similarity">
    <text evidence="4">Belongs to the SMG9 family.</text>
</comment>
<reference key="1">
    <citation type="journal article" date="2003" name="PLoS Biol.">
        <title>The genome sequence of Caenorhabditis briggsae: a platform for comparative genomics.</title>
        <authorList>
            <person name="Stein L.D."/>
            <person name="Bao Z."/>
            <person name="Blasiar D."/>
            <person name="Blumenthal T."/>
            <person name="Brent M.R."/>
            <person name="Chen N."/>
            <person name="Chinwalla A."/>
            <person name="Clarke L."/>
            <person name="Clee C."/>
            <person name="Coghlan A."/>
            <person name="Coulson A."/>
            <person name="D'Eustachio P."/>
            <person name="Fitch D.H.A."/>
            <person name="Fulton L.A."/>
            <person name="Fulton R.E."/>
            <person name="Griffiths-Jones S."/>
            <person name="Harris T.W."/>
            <person name="Hillier L.W."/>
            <person name="Kamath R."/>
            <person name="Kuwabara P.E."/>
            <person name="Mardis E.R."/>
            <person name="Marra M.A."/>
            <person name="Miner T.L."/>
            <person name="Minx P."/>
            <person name="Mullikin J.C."/>
            <person name="Plumb R.W."/>
            <person name="Rogers J."/>
            <person name="Schein J.E."/>
            <person name="Sohrmann M."/>
            <person name="Spieth J."/>
            <person name="Stajich J.E."/>
            <person name="Wei C."/>
            <person name="Willey D."/>
            <person name="Wilson R.K."/>
            <person name="Durbin R.M."/>
            <person name="Waterston R.H."/>
        </authorList>
    </citation>
    <scope>NUCLEOTIDE SEQUENCE [LARGE SCALE GENOMIC DNA]</scope>
    <source>
        <strain>AF16</strain>
    </source>
</reference>
<keyword id="KW-0866">Nonsense-mediated mRNA decay</keyword>
<keyword id="KW-1185">Reference proteome</keyword>
<proteinExistence type="inferred from homology"/>
<organism>
    <name type="scientific">Caenorhabditis briggsae</name>
    <dbReference type="NCBI Taxonomy" id="6238"/>
    <lineage>
        <taxon>Eukaryota</taxon>
        <taxon>Metazoa</taxon>
        <taxon>Ecdysozoa</taxon>
        <taxon>Nematoda</taxon>
        <taxon>Chromadorea</taxon>
        <taxon>Rhabditida</taxon>
        <taxon>Rhabditina</taxon>
        <taxon>Rhabditomorpha</taxon>
        <taxon>Rhabditoidea</taxon>
        <taxon>Rhabditidae</taxon>
        <taxon>Peloderinae</taxon>
        <taxon>Caenorhabditis</taxon>
    </lineage>
</organism>
<dbReference type="EMBL" id="HE600920">
    <property type="protein sequence ID" value="CAP25003.2"/>
    <property type="molecule type" value="Genomic_DNA"/>
</dbReference>
<dbReference type="SMR" id="A8WX27"/>
<dbReference type="FunCoup" id="A8WX27">
    <property type="interactions" value="10"/>
</dbReference>
<dbReference type="STRING" id="6238.A8WX27"/>
<dbReference type="EnsemblMetazoa" id="CBG04259.1">
    <property type="protein sequence ID" value="CBG04259.1"/>
    <property type="gene ID" value="WBGene00026972"/>
</dbReference>
<dbReference type="WormBase" id="CBG04259">
    <property type="protein sequence ID" value="CBP34379"/>
    <property type="gene ID" value="WBGene00026972"/>
    <property type="gene designation" value="Cbr-smg-9"/>
</dbReference>
<dbReference type="eggNOG" id="KOG4181">
    <property type="taxonomic scope" value="Eukaryota"/>
</dbReference>
<dbReference type="HOGENOM" id="CLU_698769_0_0_1"/>
<dbReference type="InParanoid" id="A8WX27"/>
<dbReference type="OMA" id="MYREYVF"/>
<dbReference type="Proteomes" id="UP000008549">
    <property type="component" value="Unassembled WGS sequence"/>
</dbReference>
<dbReference type="GO" id="GO:0000184">
    <property type="term" value="P:nuclear-transcribed mRNA catabolic process, nonsense-mediated decay"/>
    <property type="evidence" value="ECO:0000250"/>
    <property type="project" value="UniProtKB"/>
</dbReference>
<dbReference type="InterPro" id="IPR027417">
    <property type="entry name" value="P-loop_NTPase"/>
</dbReference>
<dbReference type="InterPro" id="IPR039177">
    <property type="entry name" value="SMG9"/>
</dbReference>
<dbReference type="PANTHER" id="PTHR14270">
    <property type="entry name" value="NONSENSE-MEDIATED MRNA DECAY FACTOR SMG9"/>
    <property type="match status" value="1"/>
</dbReference>
<dbReference type="PANTHER" id="PTHR14270:SF0">
    <property type="entry name" value="NONSENSE-MEDIATED MRNA DECAY FACTOR SMG9"/>
    <property type="match status" value="1"/>
</dbReference>
<dbReference type="SUPFAM" id="SSF52540">
    <property type="entry name" value="P-loop containing nucleoside triphosphate hydrolases"/>
    <property type="match status" value="1"/>
</dbReference>
<accession>A8WX27</accession>
<protein>
    <recommendedName>
        <fullName evidence="2">Nonsense-mediated mRNA decay factor SMG9</fullName>
    </recommendedName>
    <alternativeName>
        <fullName evidence="5">Suppressor with morphogenetic effect on genitalia protein 9</fullName>
    </alternativeName>
</protein>
<gene>
    <name type="primary">smg-9</name>
    <name type="ORF">CBG04259</name>
</gene>
<feature type="chain" id="PRO_0000378185" description="Nonsense-mediated mRNA decay factor SMG9">
    <location>
        <begin position="1"/>
        <end position="382"/>
    </location>
</feature>
<feature type="region of interest" description="Disordered" evidence="3">
    <location>
        <begin position="1"/>
        <end position="66"/>
    </location>
</feature>
<evidence type="ECO:0000250" key="1"/>
<evidence type="ECO:0000250" key="2">
    <source>
        <dbReference type="UniProtKB" id="Q9H0W8"/>
    </source>
</evidence>
<evidence type="ECO:0000256" key="3">
    <source>
        <dbReference type="SAM" id="MobiDB-lite"/>
    </source>
</evidence>
<evidence type="ECO:0000305" key="4"/>
<evidence type="ECO:0000312" key="5">
    <source>
        <dbReference type="WormBase" id="CBG04259"/>
    </source>
</evidence>
<name>SMG9_CAEBR</name>
<sequence length="382" mass="43672">MKKVEILKTPVIQQRPVAPSRTSSPPVTAPRIAIKPRPPPASGNSGIPENNGPISPPDSSVSKSSGMKESVRFLNDIGEITDSISDLLTNSPNFNVISAIGPQGAGKSTILSMLAGNNSRQMYREYVFRPVSREANEQSRHQTTQIDIYVTNHQIFLDCQPMHSFSIMEGLPKLRGGRLDEATAMSDTLRLTAFLLFISHTVLVISETHFDKTIIDTIRTSEQIRPWLHQFRPKLSIERMTNLVFIKTKASSIDTAPSVIRERAQLLRLAFRDSKWLKISKEPFKCLLVLEEIRVKREHLYEGEDEIDETMLNEFDEHIAQLRVMLQRNRDDFTVETAAMDEKKWLEMCQEVIRDKTFHRILKEFHRSDRDRSSIYAENGDR</sequence>